<feature type="chain" id="PRO_0000279450" description="UPF0711 protein C18orf21 homolog">
    <location>
        <begin position="1"/>
        <end position="218"/>
    </location>
</feature>
<feature type="region of interest" description="Disordered" evidence="2">
    <location>
        <begin position="130"/>
        <end position="192"/>
    </location>
</feature>
<feature type="compositionally biased region" description="Low complexity" evidence="2">
    <location>
        <begin position="130"/>
        <end position="146"/>
    </location>
</feature>
<feature type="compositionally biased region" description="Polar residues" evidence="2">
    <location>
        <begin position="147"/>
        <end position="156"/>
    </location>
</feature>
<feature type="compositionally biased region" description="Low complexity" evidence="2">
    <location>
        <begin position="161"/>
        <end position="172"/>
    </location>
</feature>
<feature type="compositionally biased region" description="Polar residues" evidence="2">
    <location>
        <begin position="173"/>
        <end position="183"/>
    </location>
</feature>
<feature type="modified residue" description="Phosphoserine" evidence="1">
    <location>
        <position position="126"/>
    </location>
</feature>
<feature type="modified residue" description="Phosphothreonine" evidence="1">
    <location>
        <position position="140"/>
    </location>
</feature>
<name>CR021_RAT</name>
<accession>Q4V7D8</accession>
<organism>
    <name type="scientific">Rattus norvegicus</name>
    <name type="common">Rat</name>
    <dbReference type="NCBI Taxonomy" id="10116"/>
    <lineage>
        <taxon>Eukaryota</taxon>
        <taxon>Metazoa</taxon>
        <taxon>Chordata</taxon>
        <taxon>Craniata</taxon>
        <taxon>Vertebrata</taxon>
        <taxon>Euteleostomi</taxon>
        <taxon>Mammalia</taxon>
        <taxon>Eutheria</taxon>
        <taxon>Euarchontoglires</taxon>
        <taxon>Glires</taxon>
        <taxon>Rodentia</taxon>
        <taxon>Myomorpha</taxon>
        <taxon>Muroidea</taxon>
        <taxon>Muridae</taxon>
        <taxon>Murinae</taxon>
        <taxon>Rattus</taxon>
    </lineage>
</organism>
<dbReference type="EMBL" id="BC097984">
    <property type="protein sequence ID" value="AAH97984.1"/>
    <property type="molecule type" value="mRNA"/>
</dbReference>
<dbReference type="RefSeq" id="NP_001020076.1">
    <property type="nucleotide sequence ID" value="NM_001024905.1"/>
</dbReference>
<dbReference type="FunCoup" id="Q4V7D8">
    <property type="interactions" value="1657"/>
</dbReference>
<dbReference type="STRING" id="10116.ENSRNOP00000020856"/>
<dbReference type="iPTMnet" id="Q4V7D8"/>
<dbReference type="PhosphoSitePlus" id="Q4V7D8"/>
<dbReference type="PaxDb" id="10116-ENSRNOP00000020856"/>
<dbReference type="Ensembl" id="ENSRNOT00000020856.6">
    <property type="protein sequence ID" value="ENSRNOP00000020856.3"/>
    <property type="gene ID" value="ENSRNOG00000015546.7"/>
</dbReference>
<dbReference type="GeneID" id="498830"/>
<dbReference type="KEGG" id="rno:498830"/>
<dbReference type="UCSC" id="RGD:1564673">
    <property type="organism name" value="rat"/>
</dbReference>
<dbReference type="AGR" id="RGD:1564673"/>
<dbReference type="CTD" id="498830"/>
<dbReference type="RGD" id="1564673">
    <property type="gene designation" value="C18h18orf21"/>
</dbReference>
<dbReference type="eggNOG" id="ENOG502S2A1">
    <property type="taxonomic scope" value="Eukaryota"/>
</dbReference>
<dbReference type="GeneTree" id="ENSGT00390000013383"/>
<dbReference type="HOGENOM" id="CLU_110760_0_0_1"/>
<dbReference type="InParanoid" id="Q4V7D8"/>
<dbReference type="OMA" id="HKGVNRD"/>
<dbReference type="OrthoDB" id="10049098at2759"/>
<dbReference type="PhylomeDB" id="Q4V7D8"/>
<dbReference type="TreeFam" id="TF330815"/>
<dbReference type="PRO" id="PR:Q4V7D8"/>
<dbReference type="Proteomes" id="UP000002494">
    <property type="component" value="Chromosome 18"/>
</dbReference>
<dbReference type="Bgee" id="ENSRNOG00000015546">
    <property type="expression patterns" value="Expressed in cerebellum and 19 other cell types or tissues"/>
</dbReference>
<dbReference type="InterPro" id="IPR029779">
    <property type="entry name" value="DUF4674"/>
</dbReference>
<dbReference type="PANTHER" id="PTHR31402">
    <property type="entry name" value="UPF0711 PROTEIN C18ORF21"/>
    <property type="match status" value="1"/>
</dbReference>
<dbReference type="PANTHER" id="PTHR31402:SF2">
    <property type="entry name" value="UPF0711 PROTEIN C18ORF21"/>
    <property type="match status" value="1"/>
</dbReference>
<dbReference type="Pfam" id="PF15719">
    <property type="entry name" value="DUF4674"/>
    <property type="match status" value="1"/>
</dbReference>
<reference key="1">
    <citation type="journal article" date="2004" name="Genome Res.">
        <title>The status, quality, and expansion of the NIH full-length cDNA project: the Mammalian Gene Collection (MGC).</title>
        <authorList>
            <consortium name="The MGC Project Team"/>
        </authorList>
    </citation>
    <scope>NUCLEOTIDE SEQUENCE [LARGE SCALE MRNA]</scope>
    <source>
        <tissue>Placenta</tissue>
    </source>
</reference>
<comment type="similarity">
    <text evidence="3">Belongs to the UPF0711 family.</text>
</comment>
<keyword id="KW-0597">Phosphoprotein</keyword>
<keyword id="KW-1185">Reference proteome</keyword>
<protein>
    <recommendedName>
        <fullName>UPF0711 protein C18orf21 homolog</fullName>
    </recommendedName>
</protein>
<evidence type="ECO:0000250" key="1">
    <source>
        <dbReference type="UniProtKB" id="Q32NC0"/>
    </source>
</evidence>
<evidence type="ECO:0000256" key="2">
    <source>
        <dbReference type="SAM" id="MobiDB-lite"/>
    </source>
</evidence>
<evidence type="ECO:0000305" key="3"/>
<proteinExistence type="evidence at transcript level"/>
<sequence length="218" mass="24202">MRQKYYIEAAARGLVGSCPGQARYLLWAYSSTHEDNSTFQETCPHCFQLLVLDNSRVRLKPKAKLTPKIQKLLNREARNYTLSFKETKLLRKYRDSASVLLITCRTCNRTVRHHGKSRSFLSALRSSRAASAASKASPKTPKRAAAGSTNISQSVHGSKGRSPSSTVRTPTSGQSTPICSSRNGSKRKKHFSQLKALLSQSASDKNPTLDFRHFLSSL</sequence>